<accession>M1W0X8</accession>
<accession>G8GV70</accession>
<feature type="chain" id="PRO_0000439106" description="D-lysergyl-peptide-synthetase subunit 1">
    <location>
        <begin position="1"/>
        <end position="3584"/>
    </location>
</feature>
<feature type="domain" description="Carrier 1" evidence="3 22">
    <location>
        <begin position="848"/>
        <end position="917"/>
    </location>
</feature>
<feature type="domain" description="Carrier 2" evidence="3 22">
    <location>
        <begin position="1948"/>
        <end position="2016"/>
    </location>
</feature>
<feature type="domain" description="Carrier 3" evidence="3 22">
    <location>
        <begin position="3041"/>
        <end position="3109"/>
    </location>
</feature>
<feature type="region of interest" description="Disordered" evidence="4">
    <location>
        <begin position="25"/>
        <end position="44"/>
    </location>
</feature>
<feature type="region of interest" description="Adenylation (A) domain 1" evidence="2 22">
    <location>
        <begin position="307"/>
        <end position="706"/>
    </location>
</feature>
<feature type="region of interest" description="Condensation (C) domain 1" evidence="2 22">
    <location>
        <begin position="962"/>
        <end position="1353"/>
    </location>
</feature>
<feature type="region of interest" description="Adenylation (A) domain 2" evidence="2 22">
    <location>
        <begin position="1396"/>
        <end position="1803"/>
    </location>
</feature>
<feature type="region of interest" description="Condensation (C) domain 2" evidence="2 22">
    <location>
        <begin position="2066"/>
        <end position="2483"/>
    </location>
</feature>
<feature type="region of interest" description="Adenylation (A) domain 3" evidence="2 22">
    <location>
        <begin position="2508"/>
        <end position="2906"/>
    </location>
</feature>
<feature type="region of interest" description="Cyclization (Cyc) domain" evidence="2 22">
    <location>
        <begin position="3174"/>
        <end position="3472"/>
    </location>
</feature>
<feature type="compositionally biased region" description="Basic and acidic residues" evidence="4">
    <location>
        <begin position="29"/>
        <end position="39"/>
    </location>
</feature>
<feature type="modified residue" description="O-(pantetheine 4'-phosphoryl)serine" evidence="3">
    <location>
        <position position="880"/>
    </location>
</feature>
<feature type="modified residue" description="O-(pantetheine 4'-phosphoryl)serine" evidence="3">
    <location>
        <position position="1980"/>
    </location>
</feature>
<feature type="modified residue" description="O-(pantetheine 4'-phosphoryl)serine" evidence="3">
    <location>
        <position position="3073"/>
    </location>
</feature>
<proteinExistence type="evidence at protein level"/>
<dbReference type="EC" id="2.3.1.-" evidence="11"/>
<dbReference type="EMBL" id="JN186799">
    <property type="protein sequence ID" value="AET79183.1"/>
    <property type="molecule type" value="Genomic_DNA"/>
</dbReference>
<dbReference type="EMBL" id="CAGA01000020">
    <property type="protein sequence ID" value="CCE30226.1"/>
    <property type="molecule type" value="Genomic_DNA"/>
</dbReference>
<dbReference type="SMR" id="M1W0X8"/>
<dbReference type="STRING" id="1111077.M1W0X8"/>
<dbReference type="VEuPathDB" id="FungiDB:CPUR_04074"/>
<dbReference type="eggNOG" id="KOG1175">
    <property type="taxonomic scope" value="Eukaryota"/>
</dbReference>
<dbReference type="eggNOG" id="KOG1178">
    <property type="taxonomic scope" value="Eukaryota"/>
</dbReference>
<dbReference type="HOGENOM" id="CLU_224649_0_0_1"/>
<dbReference type="OrthoDB" id="416786at2759"/>
<dbReference type="UniPathway" id="UPA00327"/>
<dbReference type="Proteomes" id="UP000016801">
    <property type="component" value="Unassembled WGS sequence"/>
</dbReference>
<dbReference type="GO" id="GO:0005737">
    <property type="term" value="C:cytoplasm"/>
    <property type="evidence" value="ECO:0007669"/>
    <property type="project" value="TreeGrafter"/>
</dbReference>
<dbReference type="GO" id="GO:0016874">
    <property type="term" value="F:ligase activity"/>
    <property type="evidence" value="ECO:0007669"/>
    <property type="project" value="UniProtKB-KW"/>
</dbReference>
<dbReference type="GO" id="GO:0031177">
    <property type="term" value="F:phosphopantetheine binding"/>
    <property type="evidence" value="ECO:0007669"/>
    <property type="project" value="InterPro"/>
</dbReference>
<dbReference type="GO" id="GO:0016740">
    <property type="term" value="F:transferase activity"/>
    <property type="evidence" value="ECO:0007669"/>
    <property type="project" value="UniProtKB-KW"/>
</dbReference>
<dbReference type="GO" id="GO:0043041">
    <property type="term" value="P:amino acid activation for nonribosomal peptide biosynthetic process"/>
    <property type="evidence" value="ECO:0007669"/>
    <property type="project" value="TreeGrafter"/>
</dbReference>
<dbReference type="GO" id="GO:0035835">
    <property type="term" value="P:indole alkaloid biosynthetic process"/>
    <property type="evidence" value="ECO:0007669"/>
    <property type="project" value="UniProtKB-UniPathway"/>
</dbReference>
<dbReference type="CDD" id="cd05918">
    <property type="entry name" value="A_NRPS_SidN3_like"/>
    <property type="match status" value="3"/>
</dbReference>
<dbReference type="CDD" id="cd19542">
    <property type="entry name" value="CT_NRPS-like"/>
    <property type="match status" value="2"/>
</dbReference>
<dbReference type="CDD" id="cd19545">
    <property type="entry name" value="FUM14_C_NRPS-like"/>
    <property type="match status" value="1"/>
</dbReference>
<dbReference type="FunFam" id="3.30.300.30:FF:000015">
    <property type="entry name" value="Nonribosomal peptide synthase SidD"/>
    <property type="match status" value="3"/>
</dbReference>
<dbReference type="FunFam" id="1.10.1200.10:FF:000005">
    <property type="entry name" value="Nonribosomal peptide synthetase 1"/>
    <property type="match status" value="1"/>
</dbReference>
<dbReference type="FunFam" id="3.40.50.12780:FF:000014">
    <property type="entry name" value="Nonribosomal peptide synthetase 1"/>
    <property type="match status" value="1"/>
</dbReference>
<dbReference type="Gene3D" id="3.30.300.30">
    <property type="match status" value="3"/>
</dbReference>
<dbReference type="Gene3D" id="1.10.1200.10">
    <property type="entry name" value="ACP-like"/>
    <property type="match status" value="3"/>
</dbReference>
<dbReference type="Gene3D" id="3.30.559.10">
    <property type="entry name" value="Chloramphenicol acetyltransferase-like domain"/>
    <property type="match status" value="3"/>
</dbReference>
<dbReference type="Gene3D" id="3.40.50.12780">
    <property type="entry name" value="N-terminal domain of ligase-like"/>
    <property type="match status" value="3"/>
</dbReference>
<dbReference type="Gene3D" id="3.30.559.30">
    <property type="entry name" value="Nonribosomal peptide synthetase, condensation domain"/>
    <property type="match status" value="4"/>
</dbReference>
<dbReference type="InterPro" id="IPR010071">
    <property type="entry name" value="AA_adenyl_dom"/>
</dbReference>
<dbReference type="InterPro" id="IPR036736">
    <property type="entry name" value="ACP-like_sf"/>
</dbReference>
<dbReference type="InterPro" id="IPR045851">
    <property type="entry name" value="AMP-bd_C_sf"/>
</dbReference>
<dbReference type="InterPro" id="IPR020845">
    <property type="entry name" value="AMP-binding_CS"/>
</dbReference>
<dbReference type="InterPro" id="IPR000873">
    <property type="entry name" value="AMP-dep_synth/lig_dom"/>
</dbReference>
<dbReference type="InterPro" id="IPR042099">
    <property type="entry name" value="ANL_N_sf"/>
</dbReference>
<dbReference type="InterPro" id="IPR023213">
    <property type="entry name" value="CAT-like_dom_sf"/>
</dbReference>
<dbReference type="InterPro" id="IPR001242">
    <property type="entry name" value="Condensatn"/>
</dbReference>
<dbReference type="InterPro" id="IPR020806">
    <property type="entry name" value="PKS_PP-bd"/>
</dbReference>
<dbReference type="InterPro" id="IPR009081">
    <property type="entry name" value="PP-bd_ACP"/>
</dbReference>
<dbReference type="InterPro" id="IPR006162">
    <property type="entry name" value="Ppantetheine_attach_site"/>
</dbReference>
<dbReference type="NCBIfam" id="TIGR01733">
    <property type="entry name" value="AA-adenyl-dom"/>
    <property type="match status" value="1"/>
</dbReference>
<dbReference type="NCBIfam" id="NF003417">
    <property type="entry name" value="PRK04813.1"/>
    <property type="match status" value="3"/>
</dbReference>
<dbReference type="PANTHER" id="PTHR45527:SF16">
    <property type="entry name" value="NONRIBOSOMAL PEPTIDE SYNTHASE ATNA-RELATED"/>
    <property type="match status" value="1"/>
</dbReference>
<dbReference type="PANTHER" id="PTHR45527">
    <property type="entry name" value="NONRIBOSOMAL PEPTIDE SYNTHETASE"/>
    <property type="match status" value="1"/>
</dbReference>
<dbReference type="Pfam" id="PF00501">
    <property type="entry name" value="AMP-binding"/>
    <property type="match status" value="3"/>
</dbReference>
<dbReference type="Pfam" id="PF00668">
    <property type="entry name" value="Condensation"/>
    <property type="match status" value="3"/>
</dbReference>
<dbReference type="Pfam" id="PF00550">
    <property type="entry name" value="PP-binding"/>
    <property type="match status" value="3"/>
</dbReference>
<dbReference type="SMART" id="SM00823">
    <property type="entry name" value="PKS_PP"/>
    <property type="match status" value="2"/>
</dbReference>
<dbReference type="SUPFAM" id="SSF56801">
    <property type="entry name" value="Acetyl-CoA synthetase-like"/>
    <property type="match status" value="3"/>
</dbReference>
<dbReference type="SUPFAM" id="SSF47336">
    <property type="entry name" value="ACP-like"/>
    <property type="match status" value="3"/>
</dbReference>
<dbReference type="SUPFAM" id="SSF52777">
    <property type="entry name" value="CoA-dependent acyltransferases"/>
    <property type="match status" value="7"/>
</dbReference>
<dbReference type="PROSITE" id="PS00455">
    <property type="entry name" value="AMP_BINDING"/>
    <property type="match status" value="2"/>
</dbReference>
<dbReference type="PROSITE" id="PS50075">
    <property type="entry name" value="CARRIER"/>
    <property type="match status" value="3"/>
</dbReference>
<dbReference type="PROSITE" id="PS00012">
    <property type="entry name" value="PHOSPHOPANTETHEINE"/>
    <property type="match status" value="2"/>
</dbReference>
<reference key="1">
    <citation type="submission" date="2011-06" db="EMBL/GenBank/DDBJ databases">
        <authorList>
            <person name="Florea S."/>
            <person name="Oeser B."/>
            <person name="Tudzynski P."/>
            <person name="Schardl C.L."/>
        </authorList>
    </citation>
    <scope>NUCLEOTIDE SEQUENCE [GENOMIC DNA]</scope>
    <source>
        <strain>20.1</strain>
    </source>
</reference>
<reference key="2">
    <citation type="journal article" date="2013" name="PLoS Genet.">
        <title>Plant-symbiotic fungi as chemical engineers: Multi-genome analysis of the Clavicipitaceae reveals dynamics of alkaloid loci.</title>
        <authorList>
            <person name="Schardl C.L."/>
            <person name="Young C.A."/>
            <person name="Hesse U."/>
            <person name="Amyotte S.G."/>
            <person name="Andreeva K."/>
            <person name="Calie P.J."/>
            <person name="Fleetwood D.J."/>
            <person name="Haws D.C."/>
            <person name="Moore N."/>
            <person name="Oeser B."/>
            <person name="Panaccione D.G."/>
            <person name="Schweri K.K."/>
            <person name="Voisey C.R."/>
            <person name="Farman M.L."/>
            <person name="Jaromczyk J.W."/>
            <person name="Roe B.A."/>
            <person name="O'Sullivan D.M."/>
            <person name="Scott B."/>
            <person name="Tudzynski P."/>
            <person name="An Z."/>
            <person name="Arnaoudova E.G."/>
            <person name="Bullock C.T."/>
            <person name="Charlton N.D."/>
            <person name="Chen L."/>
            <person name="Cox M."/>
            <person name="Dinkins R.D."/>
            <person name="Florea S."/>
            <person name="Glenn A.E."/>
            <person name="Gordon A."/>
            <person name="Gueldener U."/>
            <person name="Harris D.R."/>
            <person name="Hollin W."/>
            <person name="Jaromczyk J."/>
            <person name="Johnson R.D."/>
            <person name="Khan A.K."/>
            <person name="Leistner E."/>
            <person name="Leuchtmann A."/>
            <person name="Li C."/>
            <person name="Liu J."/>
            <person name="Liu J."/>
            <person name="Liu M."/>
            <person name="Mace W."/>
            <person name="Machado C."/>
            <person name="Nagabhyru P."/>
            <person name="Pan J."/>
            <person name="Schmid J."/>
            <person name="Sugawara K."/>
            <person name="Steiner U."/>
            <person name="Takach J.E."/>
            <person name="Tanaka E."/>
            <person name="Webb J.S."/>
            <person name="Wilson E.V."/>
            <person name="Wiseman J.L."/>
            <person name="Yoshida R."/>
            <person name="Zeng Z."/>
        </authorList>
    </citation>
    <scope>NUCLEOTIDE SEQUENCE [LARGE SCALE GENOMIC DNA]</scope>
    <source>
        <strain>20.1</strain>
    </source>
</reference>
<reference key="3">
    <citation type="journal article" date="1999" name="Mol. Gen. Genet.">
        <title>Evidence for an ergot alkaloid gene cluster in Claviceps purpurea.</title>
        <authorList>
            <person name="Tudzynski P."/>
            <person name="Hoelter K."/>
            <person name="Correia T.H."/>
            <person name="Arntz C."/>
            <person name="Grammel N."/>
            <person name="Keller U."/>
        </authorList>
    </citation>
    <scope>IDENTIFICATION IN THE EAS CLUSTER</scope>
    <scope>FUNCTION</scope>
    <source>
        <strain>P1 / 1029/N5</strain>
    </source>
</reference>
<reference key="4">
    <citation type="journal article" date="2001" name="Appl. Microbiol. Biotechnol.">
        <title>Biotechnology and genetics of ergot alkaloids.</title>
        <authorList>
            <person name="Tudzynski P."/>
            <person name="Correia T."/>
            <person name="Keller U."/>
        </authorList>
    </citation>
    <scope>BIOTECHNOLOGY</scope>
    <source>
        <strain>P1 / 1029/N5</strain>
    </source>
</reference>
<reference key="5">
    <citation type="journal article" date="2003" name="Chem. Biol.">
        <title>Molecular cloning and analysis of the ergopeptine assembly system in the ergot fungus Claviceps purpurea.</title>
        <authorList>
            <person name="Correia T."/>
            <person name="Grammel N."/>
            <person name="Ortel I."/>
            <person name="Keller U."/>
            <person name="Tudzynski P."/>
        </authorList>
    </citation>
    <scope>FUNCTION</scope>
    <scope>DOMAIN</scope>
</reference>
<reference key="6">
    <citation type="journal article" date="2004" name="Fungal Genet. Biol.">
        <title>The determinant step in ergot alkaloid biosynthesis by an endophyte of perennial ryegrass.</title>
        <authorList>
            <person name="Wang J."/>
            <person name="Machado C."/>
            <person name="Panaccione D.G."/>
            <person name="Tsai H.-F."/>
            <person name="Schardl C.L."/>
        </authorList>
    </citation>
    <scope>FUNCTION</scope>
    <source>
        <strain>ATCC 20102 / Farmitalia FI 32/17</strain>
    </source>
</reference>
<reference key="7">
    <citation type="journal article" date="2005" name="Phytochemistry">
        <title>The ergot alkaloid gene cluster in Claviceps purpurea: extension of the cluster sequence and intra species evolution.</title>
        <authorList>
            <person name="Haarmann T."/>
            <person name="Machado C."/>
            <person name="Lubbe Y."/>
            <person name="Correia T."/>
            <person name="Schardl C.L."/>
            <person name="Panaccione D.G."/>
            <person name="Tudzynski P."/>
        </authorList>
    </citation>
    <scope>IDENTIFICATION IN THE EAS CLUSTER</scope>
    <scope>FUNCTION</scope>
    <scope>DOMAIN</scope>
</reference>
<reference key="8">
    <citation type="journal article" date="2006" name="ChemBioChem">
        <title>Identification of the cytochrome P450 monooxygenase that bridges the clavine and ergoline alkaloid pathways.</title>
        <authorList>
            <person name="Haarmann T."/>
            <person name="Ortel I."/>
            <person name="Tudzynski P."/>
            <person name="Keller U."/>
        </authorList>
    </citation>
    <scope>FUNCTION</scope>
    <source>
        <strain>P1 / 1029/N5</strain>
    </source>
</reference>
<reference key="9">
    <citation type="journal article" date="2007" name="Appl. Environ. Microbiol.">
        <title>A complex ergovaline gene cluster in epichloe endophytes of grasses.</title>
        <authorList>
            <person name="Fleetwood D.J."/>
            <person name="Scott B."/>
            <person name="Lane G.A."/>
            <person name="Tanaka A."/>
            <person name="Johnson R.D."/>
        </authorList>
    </citation>
    <scope>FUNCTION</scope>
</reference>
<reference key="10">
    <citation type="journal article" date="2007" name="Appl. Environ. Microbiol.">
        <title>Comparison of ergot alkaloid biosynthesis gene clusters in Claviceps species indicates loss of late pathway steps in evolution of C. fusiformis.</title>
        <authorList>
            <person name="Lorenz N."/>
            <person name="Wilson E.V."/>
            <person name="Machado C."/>
            <person name="Schardl C.L."/>
            <person name="Tudzynski P."/>
        </authorList>
    </citation>
    <scope>FUNCTION</scope>
</reference>
<reference key="11">
    <citation type="journal article" date="2008" name="Fungal Genet. Biol.">
        <title>Use of a nonhomologous end joining deficient strain (Deltaku70) of the ergot fungus Claviceps purpurea for identification of a nonribosomal peptide synthetase gene involved in ergotamine biosynthesis.</title>
        <authorList>
            <person name="Haarmann T."/>
            <person name="Lorenz N."/>
            <person name="Tudzynski P."/>
        </authorList>
    </citation>
    <scope>FUNCTION</scope>
    <scope>DISRUPTION PHENOTYPE</scope>
</reference>
<reference key="12">
    <citation type="journal article" date="2009" name="J. Biol. Chem.">
        <title>Combinatorial assembly of simple and complex D-lysergic acid alkaloid peptide classes in the ergot fungus Claviceps purpurea.</title>
        <authorList>
            <person name="Ortel I."/>
            <person name="Keller U."/>
        </authorList>
    </citation>
    <scope>FUNCTION</scope>
    <scope>DOMAIN</scope>
    <scope>CATALYTIC ACTIVITY</scope>
    <scope>PATHWAY</scope>
</reference>
<reference key="13">
    <citation type="journal article" date="2010" name="Appl. Environ. Microbiol.">
        <title>Alkaloid cluster gene ccsA of the ergot fungus Claviceps purpurea encodes chanoclavine I synthase, a flavin adenine dinucleotide-containing oxidoreductase mediating the transformation of N-methyl-dimethylallyltryptophan to chanoclavine I.</title>
        <authorList>
            <person name="Lorenz N."/>
            <person name="Olsovska J."/>
            <person name="Sulc M."/>
            <person name="Tudzynski P."/>
        </authorList>
    </citation>
    <scope>FUNCTION</scope>
</reference>
<reference key="14">
    <citation type="journal article" date="2010" name="J. Am. Chem. Soc.">
        <title>Controlling a structural branch point in ergot alkaloid biosynthesis.</title>
        <authorList>
            <person name="Cheng J.Z."/>
            <person name="Coyle C.M."/>
            <person name="Panaccione D.G."/>
            <person name="O'Connor S.E."/>
        </authorList>
    </citation>
    <scope>FUNCTION</scope>
    <source>
        <strain>ATCC 20102 / Farmitalia FI 32/17</strain>
    </source>
</reference>
<reference key="15">
    <citation type="journal article" date="2011" name="Curr. Genet.">
        <title>Ergot cluster-encoded catalase is required for synthesis of chanoclavine-I in Aspergillus fumigatus.</title>
        <authorList>
            <person name="Goetz K.E."/>
            <person name="Coyle C.M."/>
            <person name="Cheng J.Z."/>
            <person name="O'Connor S.E."/>
            <person name="Panaccione D.G."/>
        </authorList>
    </citation>
    <scope>FUNCTION</scope>
</reference>
<reference key="16">
    <citation type="journal article" date="2011" name="Org. Biomol. Chem.">
        <title>New insights into ergot alkaloid biosynthesis in Claviceps purpurea: an agroclavine synthase EasG catalyses, via a non-enzymatic adduct with reduced glutathione, the conversion of chanoclavine-I aldehyde to agroclavine.</title>
        <authorList>
            <person name="Matuschek M."/>
            <person name="Wallwey C."/>
            <person name="Xie X."/>
            <person name="Li S.M."/>
        </authorList>
    </citation>
    <scope>FUNCTION</scope>
</reference>
<reference key="17">
    <citation type="journal article" date="2014" name="Chem. Biol.">
        <title>Cyclolization of D-lysergic acid alkaloid peptides.</title>
        <authorList>
            <person name="Havemann J."/>
            <person name="Vogel D."/>
            <person name="Loll B."/>
            <person name="Keller U."/>
        </authorList>
    </citation>
    <scope>FUNCTION</scope>
</reference>
<sequence>MSIPIPEKLQDLTAVKSPSAFGNSIESINGDKNKSERHTASSSAVSTSEIGHPCLLTNFKLAVACSGPAITKVATVNDKDSGSKLKNVINGKDISASEVFKGAWSVVLGTYLAKSHVSLDYGVMKPKGLGPETSCNARVPSENSEMSTSSFLLRANDTLLDIIRQNSMCAHTELRQKSSLDDVESPKRCNTCVIYWPEISCSEQLQIDAWMTILEENDQLTQYDCMIHFASDMRCMLSYRDQFMSENQARHLAATMRVVLSSIASAPQQSLADVDVCSSLDYQTLSRWNLKAPIVSEVCVHDLIEKSCCSRPNSQAVVSWDGCLTYNEMDRLSSHLAQRLRDAGVEPGVFVALCLDRCKWAVIGIVAVMKAGGAFCALDPSYPVSRLKEMCRDLGITIVLTVKSNIQHASPLASKVFALDDDVYFESALSSAHESASWVSVSPHDPVYAVFTSGSTGKPKGIIMEHASFSACALSSVKPLQIADQDRVLHFASYAFDASVIEILAPLIAGATVAIPSERARLEDLPRAMTDLKATWAFLTPTVARLYRPEQMPTLKTLCLGGEAVNASDTRSWSSKNLISGYNPAECCPLGISGPLNDRMPRSLGSTFASQTAWIVDPKDHEKLLPAGAIGELAIEGPVVARGYIHDVTCSDPSTPFVVKLPPWLRRFRATANRGNRIYLTGDLARLDCDDGSVHYLGRKDDQVKIHGQRVELAEIEHHLEQHFVSLATKAVVMLLRPISGRTVLAALIMPHQRLQHGNKSLESLLMEPGDVSQDFRANLASAASKLRLALPSHMVPSVYLPIRHFSTTKSGKIDRGHLQSLLLSLSPENLYGCEETTHRGEEPKSDREKLLQALFAQSLDLPCTRIDLDSNFFQLGGDSLSAMRLLALALEEGISSIAYQDIFSHPTLREIVIVSTSATSREPLYSETVETPPFSLIKDPEMLIQIASEQCGSGVGKADIEDIYPCTHLQQSLMASTAHNPNAYVAILAFKLKSGVDRTRLERAWHIACSGHAILRTRLVQTDTGDCYQVVVKKPPHWTETNEVSDDGSTNSLLRTSFGLGRPLIQLHLTTDQLFVAMHHALYDGWSLPMLIGELDLAYRELSVRRLPCLKNYVKYAMDSADAAASFWQAELQDADPVHFPAPSSLDYKPQPCAAMTISVPLVNSPRRNVTLATEIQFAWAMTVYTYTGCKDVIFGLISSGRAAPVAQIESILGPTFACTPLRVSIDPQGKLGEALDDLQYTIVEQSMFVHFGAQAIRQLGPNAAAACNFQTVLAVEADGPETGEEEGSWFTRYDFLSDVASFSSYALTLRCKLSTRGVEINAVYDKLMVDERQMGRILAQFEHILTQIHSNETVHDDIGGLDKLSVSDWRQLQAWNSNLPPAHPKGLGAHQAIQAKCQAQPDATAIDAWDGCVTYGELERRAEKLAGLVRSHVSKPDQVVVLYFSKSWLTVVAQLAVLKAGAAFITLEISQPVHYLQRVISALGPVLVLTSEDLFSAAEDLQDNAVPVMAVDKDDLSDATARTSQASSSACTVECDLMYIIATSGTTGMPKIVMTDHQAFMTNASPLMNGLGITSDSRVFQFCGYSFDLLIVEHFLTLLAGGCICIPSLHNRNNRFAASIVELEANWVGSPSSVLQLLDPQTVPTVKTIMQAGERLQQGLVDRWASHVRLINAYGPAECSVGALARDTVRPDTDDVQNLGFATGSVCWIVNAETSEKLLPVPIGAEGELIIEGHTLSRGYLGDADKTNASFLRLPNWLRDFRADRGQSQGHRVYLTGDIVRQNSDGSMSFVRRKDAQVKIRGQRVELTDVEHQVERCFIGAHQVVTDIVQIPNSQSSILVALVLTKDAMTNHKQQESLLDQKSAGGLSILAPTSSFTANANAAETALQDRMPAYMVPDLFVPVSDLPREASGKIGRKAIKQYLASLTQQDWSRYSSTRKVPPSNATEHEISAIWARVLQIEPHTFGVHDSFFRLGGDSISGMQVAAACGAAGISVTVKDMFEYRTIRKLALARGETQQLTVGTTSTVSNASGIRQKKALHPFYPEGRLEVYMERMQSRLGQAIERIYPCSPIQQGILMSHARNPHHYDEVIQWKVAGDVSCDISRMQRAWREVVSRHGILRTLFLQVSEDSFLDQVVLKNYSPDISVCTNEEDVEPYRPFEDSVPMHHLLVFQRSADDVTVYLRIHHALVDGLSLHIIRRDLELAYQGRLDELAQPPGYHEYISYLQEKRSRKSLQEYWSSYLQGATGSLFPAVQDEPASDGQYFGAVEIELGSIAKLTQFCEEHKLGVTVVLHVVWAIIVQRYAATDEVCFGYMTSGRHVPVTNVENVVGPLFNMLIGRVKLAYHLSVLSTMYAYQENFINSLDHQHQSLVETLHSIGSSAGDLFNTLITVVNDQPEDHVSQSALRLVGDSVQSRSEYPITLNILNHADKIKMQLSYHTSLLSGVSANTIAKAFRFVLQRTLEQPHELLRALPVLDEDQMNNEFQKNRSVPPQVEELIHDTIHQQCIRCPDSPSVCAWDGNFTYRQLDDLSSALSEEIVRKGAGPEVTIPIVLEKTRWTPVAMLAVLKSGSSFVLMDSTHPAARLGAIIQDVGHPVIIVSAQTRSKVATFSTDVVEVGDWLAREILVAKQQITRQNGLLQATNAAYLVFTSGSTGKPKGAIVEHASLSTAAKYMASRLHIDSASRVLQFSSHAWDIPVTEVLVTLRMGGCVCVPSEEERTGNLAKASERMKVNWALWTPTVARLFKPEEFPHLETLVFAGEALSAADLETWCDRVRLIQGYGPAECSLISTVTDPLTRSDNPRCIGLPSGCVAWVVNRDTHELLAPPGAIGELVLEGPIVGRGYLGDPERAASAFISPPAWLMKLRGSGSSIRLYKTGDLVRQHVSSGLLTFVGRNDDQVKVRGQRVEPGEVEGQVAQVFPGSQVIVLVVKRSAGAVLAALVLQNGEDRSSAGETANLFPPPSLAFAALAKAAFSKLRETMPTYMIPSIILPLSYLPKAATGKADRNLLRDRVASLSDEEIEAYVAASVSHRPASTAMEAELQQLVGQVLQRPLHSISLDEDLFRLGMDSLTAMTIASAARRRGWEVSVPIIFQHSRLSDLARIVEQGQHGTSSRSQLEEARAILNKRLVSLLPEICTKWDLREDQITHIAPTTYYQHMALASDHEAFFGLYFSKPMASEALKAAASRVVKLHSILRTAFVPLEDTYVQLTLCDFDLPSQEIQTNQAEVSAAMELFCRDAADKTAGFGVPVTKLILMLDRQGDCLSLLLRLQRAQFDGVSVMRIMADWRSALEHASCSWEPAPSLDYADFALGRVAQNTPDVFGMWRDVLQGSSMTYLIPQEKYISMTDRAHAERLVTSSCDIPLPEPAPGYTMATVAKAAWAICLARETESEDLLFLQLVRNRHLALDGIDKMVGCSLNYVPVRVPLRRDWKISDLLHWLHQQHIRTMAGDTADWPDVVAKSTTWSSDTEFGSVIHYLSAPAAPVYHFPGDTVAQFQLYDEKMTHTCPLVTCVEFPGPAEDSGRQMKILVTSAVGGQDMVDRLLAVFRSLLCEANAQLDQPLSNILQGLRDGDDATGKAR</sequence>
<organism>
    <name type="scientific">Claviceps purpurea (strain 20.1)</name>
    <name type="common">Ergot fungus</name>
    <name type="synonym">Sphacelia segetum</name>
    <dbReference type="NCBI Taxonomy" id="1111077"/>
    <lineage>
        <taxon>Eukaryota</taxon>
        <taxon>Fungi</taxon>
        <taxon>Dikarya</taxon>
        <taxon>Ascomycota</taxon>
        <taxon>Pezizomycotina</taxon>
        <taxon>Sordariomycetes</taxon>
        <taxon>Hypocreomycetidae</taxon>
        <taxon>Hypocreales</taxon>
        <taxon>Clavicipitaceae</taxon>
        <taxon>Claviceps</taxon>
    </lineage>
</organism>
<protein>
    <recommendedName>
        <fullName evidence="17">D-lysergyl-peptide-synthetase subunit 1</fullName>
        <shortName evidence="17">LPS1</shortName>
        <ecNumber evidence="11">2.3.1.-</ecNumber>
    </recommendedName>
    <alternativeName>
        <fullName evidence="17">Ergot alkaloid synthesis protein ps1</fullName>
    </alternativeName>
    <alternativeName>
        <fullName evidence="17">Nonribosomal peptide synthetase 1</fullName>
    </alternativeName>
</protein>
<gene>
    <name evidence="18" type="primary">lpsA1</name>
    <name evidence="17" type="synonym">cpps1</name>
    <name type="ORF">CPUR_04074</name>
</gene>
<evidence type="ECO:0000250" key="1">
    <source>
        <dbReference type="UniProtKB" id="Q50EL0"/>
    </source>
</evidence>
<evidence type="ECO:0000255" key="2"/>
<evidence type="ECO:0000255" key="3">
    <source>
        <dbReference type="PROSITE-ProRule" id="PRU00258"/>
    </source>
</evidence>
<evidence type="ECO:0000256" key="4">
    <source>
        <dbReference type="SAM" id="MobiDB-lite"/>
    </source>
</evidence>
<evidence type="ECO:0000269" key="5">
    <source>
    </source>
</evidence>
<evidence type="ECO:0000269" key="6">
    <source>
    </source>
</evidence>
<evidence type="ECO:0000269" key="7">
    <source>
    </source>
</evidence>
<evidence type="ECO:0000269" key="8">
    <source>
    </source>
</evidence>
<evidence type="ECO:0000269" key="9">
    <source>
    </source>
</evidence>
<evidence type="ECO:0000269" key="10">
    <source>
    </source>
</evidence>
<evidence type="ECO:0000269" key="11">
    <source>
    </source>
</evidence>
<evidence type="ECO:0000269" key="12">
    <source>
    </source>
</evidence>
<evidence type="ECO:0000269" key="13">
    <source>
    </source>
</evidence>
<evidence type="ECO:0000269" key="14">
    <source>
    </source>
</evidence>
<evidence type="ECO:0000269" key="15">
    <source>
    </source>
</evidence>
<evidence type="ECO:0000269" key="16">
    <source>
    </source>
</evidence>
<evidence type="ECO:0000303" key="17">
    <source>
    </source>
</evidence>
<evidence type="ECO:0000303" key="18">
    <source>
    </source>
</evidence>
<evidence type="ECO:0000305" key="19"/>
<evidence type="ECO:0000305" key="20">
    <source>
    </source>
</evidence>
<evidence type="ECO:0000305" key="21">
    <source>
    </source>
</evidence>
<evidence type="ECO:0000305" key="22">
    <source>
    </source>
</evidence>
<comment type="function">
    <text evidence="1 5 6 7 8 9 10 11 12 13 14 15 16 20 21">D-lysergyl-peptide-synthetase subunit 1; part of the gene cluster that mediates the biosynthesis of fungal ergot alkaloid (PubMed:10071219, PubMed:14700635, PubMed:14732265, PubMed:15904941, PubMed:17308187, PubMed:17720822). DmaW catalyzes the first step of ergot alkaloid biosynthesis by condensing dimethylallyl diphosphate (DMAP) and tryptophan to form 4-dimethylallyl-L-tryptophan (PubMed:14732265). The second step is catalyzed by the methyltransferase easF that methylates 4-dimethylallyl-L-tryptophan in the presence of S-adenosyl-L-methionine, resulting in the formation of 4-dimethylallyl-L-abrine (By similarity). The catalase easC and the FAD-dependent oxidoreductase easE then transform 4-dimethylallyl-L-abrine to chanoclavine-I which is further oxidized by easD in the presence of NAD(+), resulting in the formation of chanoclavine-I aldehyde (PubMed:20118373, PubMed:21409592). Agroclavine dehydrogenase easG then mediates the conversion of chanoclavine-I aldehyde to agroclavine via a non-enzymatic adduct reaction: the substrate is an iminium intermediate that is formed spontaneously from chanoclavine-I aldehyde in the presence of glutathione (PubMed:20735127, PubMed:21494745). The presence of easA is not required to complete this reaction (PubMed:21494745). Further conversion of agroclavine to paspalic acid is a two-step process involving oxidation of agroclavine to elymoclavine and of elymoclavine to paspalic acid, the second step being performed by the elymoclavine oxidase cloA (PubMed:16538694, PubMed:17720822). Paspalic acid is then further converted to D-lysergic acid (PubMed:15904941). Ergopeptines are assembled from D-lysergic acid and three different amino acids by the D-lysergyl-peptide-synthetases composed each of a monomudular and a trimodular nonribosomal peptide synthetase subunit (PubMed:14700635, PubMed:15904941). LpsB and lpsC encode the monomodular subunits responsible for D-lysergic acid activation and incorporation into the ergopeptine backbone (PubMed:14700635). LpsA1 and A2 subunits encode the trimodular nonribosomal peptide synthetase assembling the tripeptide portion of ergopeptines (PubMed:14700635). LpsA1 is responsible for formation of the major ergopeptine, ergotamine, and lpsA2 for alpha-ergocryptine, the minor ergopeptine of the total alkaloid mixture elaborated by C.purpurea (PubMed:17560817, PubMed:19139103). D-lysergyl-tripeptides are assembled by the nonribosomal peptide synthetases and released as N-(D-lysergyl-aminoacyl)-lactams (PubMed:24361048). Cyclolization of the D-lysergyl-tripeptides is performed by the Fe(2+)/2-ketoglutarate-dependent dioxygenase easH which introduces a hydroxyl group into N-(D-lysergyl-aminoacyl)-lactam at alpha-C of the aminoacyl residue followed by spontaneous condensation with the terminal lactam carbonyl group (PubMed:24361048).</text>
</comment>
<comment type="pathway">
    <text evidence="11">Alkaloid biosynthesis; ergot alkaloid biosynthesis.</text>
</comment>
<comment type="domain">
    <text evidence="5 6 11">NRP synthetases are composed of discrete domains (adenylation (A), thiolation (T) or peptidyl carrier protein (PCP) and condensation (C) domains) which when grouped together are referred to as a single module (PubMed:10071219). Each module is responsible for the recognition (via the A domain) and incorporation of a single amino acid into the growing peptide product (PubMed:10071219). Thus, an NRP synthetase is generally composed of one or more modules and can terminate in a thioesterase domain (TE) or reductase domain (R) that releases the newly synthesized peptide from the enzyme (PubMed:10071219). LpsA1 has a domain arrangement (A-T-C-A-T-C-A-T-Cyc) with 3 A and 3 peptidyl carrier (PCP/T) domains, 2 C-domains, and a terminal domain called the Cyc domain (PubMed:19139103). The Cyc domain has limited similarity to both C and Cy domains of NRPS but is most different in the so-called C3 and Cy3 motif of the latter domains, suggesting a special mechanism in acyl diketopiperazine formation, which is the final step of D-lysergyl peptide lactam synthesis (PubMed:19139103). LpsA1 misses an N-terminal C domain in the first module, leading to the conclusion that this C domain is located on the other subunit (lpsB or lpsC) containing the D-lysergic acid module (PubMed:19139103).</text>
</comment>
<comment type="disruption phenotype">
    <text evidence="10">Abolishes the production of ergotamine but is still able to produce ergocryptine (PubMed:17560817).</text>
</comment>
<comment type="similarity">
    <text evidence="19">Belongs to the NRP synthetase family.</text>
</comment>
<name>LPSA1_CLAP2</name>
<keyword id="KW-0436">Ligase</keyword>
<keyword id="KW-0596">Phosphopantetheine</keyword>
<keyword id="KW-0597">Phosphoprotein</keyword>
<keyword id="KW-1185">Reference proteome</keyword>
<keyword id="KW-0677">Repeat</keyword>
<keyword id="KW-0808">Transferase</keyword>